<name>KITH_STRA5</name>
<sequence>MAQLYYKYGTMNSGKTIEILKVAHNYEEQGKPVVIMTSALDTRDEFGVVSSRIGMRREAVPISDDMDIFSYIQNLPQKPYCVLIDECQFLSKKNVYDLARVVDDLDVPVMAFGLKNDFQNNLFEGSKHLLLLADKIDEIKTICQYCSKKATMVLRTENGKPVYEGDQIQIGGNETYIPVCRKHYFNPDI</sequence>
<feature type="chain" id="PRO_0000175027" description="Thymidine kinase">
    <location>
        <begin position="1"/>
        <end position="189"/>
    </location>
</feature>
<feature type="active site" description="Proton acceptor" evidence="1">
    <location>
        <position position="86"/>
    </location>
</feature>
<feature type="binding site" evidence="1">
    <location>
        <begin position="9"/>
        <end position="16"/>
    </location>
    <ligand>
        <name>ATP</name>
        <dbReference type="ChEBI" id="CHEBI:30616"/>
    </ligand>
</feature>
<feature type="binding site" evidence="1">
    <location>
        <begin position="85"/>
        <end position="88"/>
    </location>
    <ligand>
        <name>ATP</name>
        <dbReference type="ChEBI" id="CHEBI:30616"/>
    </ligand>
</feature>
<feature type="binding site" evidence="1">
    <location>
        <position position="143"/>
    </location>
    <ligand>
        <name>Zn(2+)</name>
        <dbReference type="ChEBI" id="CHEBI:29105"/>
    </ligand>
</feature>
<feature type="binding site" evidence="1">
    <location>
        <position position="146"/>
    </location>
    <ligand>
        <name>Zn(2+)</name>
        <dbReference type="ChEBI" id="CHEBI:29105"/>
    </ligand>
</feature>
<feature type="binding site" evidence="1">
    <location>
        <position position="180"/>
    </location>
    <ligand>
        <name>Zn(2+)</name>
        <dbReference type="ChEBI" id="CHEBI:29105"/>
    </ligand>
</feature>
<feature type="binding site" evidence="1">
    <location>
        <position position="183"/>
    </location>
    <ligand>
        <name>Zn(2+)</name>
        <dbReference type="ChEBI" id="CHEBI:29105"/>
    </ligand>
</feature>
<reference key="1">
    <citation type="journal article" date="2002" name="Proc. Natl. Acad. Sci. U.S.A.">
        <title>Complete genome sequence and comparative genomic analysis of an emerging human pathogen, serotype V Streptococcus agalactiae.</title>
        <authorList>
            <person name="Tettelin H."/>
            <person name="Masignani V."/>
            <person name="Cieslewicz M.J."/>
            <person name="Eisen J.A."/>
            <person name="Peterson S.N."/>
            <person name="Wessels M.R."/>
            <person name="Paulsen I.T."/>
            <person name="Nelson K.E."/>
            <person name="Margarit I."/>
            <person name="Read T.D."/>
            <person name="Madoff L.C."/>
            <person name="Wolf A.M."/>
            <person name="Beanan M.J."/>
            <person name="Brinkac L.M."/>
            <person name="Daugherty S.C."/>
            <person name="DeBoy R.T."/>
            <person name="Durkin A.S."/>
            <person name="Kolonay J.F."/>
            <person name="Madupu R."/>
            <person name="Lewis M.R."/>
            <person name="Radune D."/>
            <person name="Fedorova N.B."/>
            <person name="Scanlan D."/>
            <person name="Khouri H.M."/>
            <person name="Mulligan S."/>
            <person name="Carty H.A."/>
            <person name="Cline R.T."/>
            <person name="Van Aken S.E."/>
            <person name="Gill J."/>
            <person name="Scarselli M."/>
            <person name="Mora M."/>
            <person name="Iacobini E.T."/>
            <person name="Brettoni C."/>
            <person name="Galli G."/>
            <person name="Mariani M."/>
            <person name="Vegni F."/>
            <person name="Maione D."/>
            <person name="Rinaudo D."/>
            <person name="Rappuoli R."/>
            <person name="Telford J.L."/>
            <person name="Kasper D.L."/>
            <person name="Grandi G."/>
            <person name="Fraser C.M."/>
        </authorList>
    </citation>
    <scope>NUCLEOTIDE SEQUENCE [LARGE SCALE GENOMIC DNA]</scope>
    <source>
        <strain>ATCC BAA-611 / 2603 V/R</strain>
    </source>
</reference>
<proteinExistence type="inferred from homology"/>
<protein>
    <recommendedName>
        <fullName evidence="1">Thymidine kinase</fullName>
        <ecNumber evidence="1">2.7.1.21</ecNumber>
    </recommendedName>
</protein>
<evidence type="ECO:0000255" key="1">
    <source>
        <dbReference type="HAMAP-Rule" id="MF_00124"/>
    </source>
</evidence>
<keyword id="KW-0067">ATP-binding</keyword>
<keyword id="KW-0963">Cytoplasm</keyword>
<keyword id="KW-0237">DNA synthesis</keyword>
<keyword id="KW-0418">Kinase</keyword>
<keyword id="KW-0479">Metal-binding</keyword>
<keyword id="KW-0547">Nucleotide-binding</keyword>
<keyword id="KW-1185">Reference proteome</keyword>
<keyword id="KW-0808">Transferase</keyword>
<keyword id="KW-0862">Zinc</keyword>
<gene>
    <name evidence="1" type="primary">tdk</name>
    <name type="ordered locus">SAG1078</name>
</gene>
<dbReference type="EC" id="2.7.1.21" evidence="1"/>
<dbReference type="EMBL" id="AE009948">
    <property type="protein sequence ID" value="AAM99959.1"/>
    <property type="molecule type" value="Genomic_DNA"/>
</dbReference>
<dbReference type="RefSeq" id="NP_688087.1">
    <property type="nucleotide sequence ID" value="NC_004116.1"/>
</dbReference>
<dbReference type="RefSeq" id="WP_000068109.1">
    <property type="nucleotide sequence ID" value="NC_004116.1"/>
</dbReference>
<dbReference type="SMR" id="Q8DZM3"/>
<dbReference type="STRING" id="208435.SAG1078"/>
<dbReference type="KEGG" id="sag:SAG1078"/>
<dbReference type="PATRIC" id="fig|208435.3.peg.1087"/>
<dbReference type="HOGENOM" id="CLU_064400_2_2_9"/>
<dbReference type="OrthoDB" id="9781579at2"/>
<dbReference type="Proteomes" id="UP000000821">
    <property type="component" value="Chromosome"/>
</dbReference>
<dbReference type="GO" id="GO:0005829">
    <property type="term" value="C:cytosol"/>
    <property type="evidence" value="ECO:0007669"/>
    <property type="project" value="TreeGrafter"/>
</dbReference>
<dbReference type="GO" id="GO:0005524">
    <property type="term" value="F:ATP binding"/>
    <property type="evidence" value="ECO:0007669"/>
    <property type="project" value="UniProtKB-UniRule"/>
</dbReference>
<dbReference type="GO" id="GO:0004797">
    <property type="term" value="F:thymidine kinase activity"/>
    <property type="evidence" value="ECO:0007669"/>
    <property type="project" value="UniProtKB-UniRule"/>
</dbReference>
<dbReference type="GO" id="GO:0008270">
    <property type="term" value="F:zinc ion binding"/>
    <property type="evidence" value="ECO:0007669"/>
    <property type="project" value="UniProtKB-UniRule"/>
</dbReference>
<dbReference type="GO" id="GO:0071897">
    <property type="term" value="P:DNA biosynthetic process"/>
    <property type="evidence" value="ECO:0007669"/>
    <property type="project" value="UniProtKB-KW"/>
</dbReference>
<dbReference type="GO" id="GO:0046104">
    <property type="term" value="P:thymidine metabolic process"/>
    <property type="evidence" value="ECO:0007669"/>
    <property type="project" value="TreeGrafter"/>
</dbReference>
<dbReference type="Gene3D" id="3.30.60.20">
    <property type="match status" value="1"/>
</dbReference>
<dbReference type="Gene3D" id="3.40.50.300">
    <property type="entry name" value="P-loop containing nucleotide triphosphate hydrolases"/>
    <property type="match status" value="1"/>
</dbReference>
<dbReference type="HAMAP" id="MF_00124">
    <property type="entry name" value="Thymidine_kinase"/>
    <property type="match status" value="1"/>
</dbReference>
<dbReference type="InterPro" id="IPR027417">
    <property type="entry name" value="P-loop_NTPase"/>
</dbReference>
<dbReference type="InterPro" id="IPR001267">
    <property type="entry name" value="Thymidine_kinase"/>
</dbReference>
<dbReference type="InterPro" id="IPR020633">
    <property type="entry name" value="Thymidine_kinase_CS"/>
</dbReference>
<dbReference type="NCBIfam" id="NF003299">
    <property type="entry name" value="PRK04296.1-4"/>
    <property type="match status" value="1"/>
</dbReference>
<dbReference type="NCBIfam" id="NF003300">
    <property type="entry name" value="PRK04296.1-5"/>
    <property type="match status" value="1"/>
</dbReference>
<dbReference type="PANTHER" id="PTHR11441">
    <property type="entry name" value="THYMIDINE KINASE"/>
    <property type="match status" value="1"/>
</dbReference>
<dbReference type="PANTHER" id="PTHR11441:SF0">
    <property type="entry name" value="THYMIDINE KINASE, CYTOSOLIC"/>
    <property type="match status" value="1"/>
</dbReference>
<dbReference type="Pfam" id="PF00265">
    <property type="entry name" value="TK"/>
    <property type="match status" value="1"/>
</dbReference>
<dbReference type="PIRSF" id="PIRSF035805">
    <property type="entry name" value="TK_cell"/>
    <property type="match status" value="1"/>
</dbReference>
<dbReference type="SUPFAM" id="SSF57716">
    <property type="entry name" value="Glucocorticoid receptor-like (DNA-binding domain)"/>
    <property type="match status" value="1"/>
</dbReference>
<dbReference type="SUPFAM" id="SSF52540">
    <property type="entry name" value="P-loop containing nucleoside triphosphate hydrolases"/>
    <property type="match status" value="1"/>
</dbReference>
<dbReference type="PROSITE" id="PS00603">
    <property type="entry name" value="TK_CELLULAR_TYPE"/>
    <property type="match status" value="1"/>
</dbReference>
<organism>
    <name type="scientific">Streptococcus agalactiae serotype V (strain ATCC BAA-611 / 2603 V/R)</name>
    <dbReference type="NCBI Taxonomy" id="208435"/>
    <lineage>
        <taxon>Bacteria</taxon>
        <taxon>Bacillati</taxon>
        <taxon>Bacillota</taxon>
        <taxon>Bacilli</taxon>
        <taxon>Lactobacillales</taxon>
        <taxon>Streptococcaceae</taxon>
        <taxon>Streptococcus</taxon>
    </lineage>
</organism>
<accession>Q8DZM3</accession>
<comment type="catalytic activity">
    <reaction evidence="1">
        <text>thymidine + ATP = dTMP + ADP + H(+)</text>
        <dbReference type="Rhea" id="RHEA:19129"/>
        <dbReference type="ChEBI" id="CHEBI:15378"/>
        <dbReference type="ChEBI" id="CHEBI:17748"/>
        <dbReference type="ChEBI" id="CHEBI:30616"/>
        <dbReference type="ChEBI" id="CHEBI:63528"/>
        <dbReference type="ChEBI" id="CHEBI:456216"/>
        <dbReference type="EC" id="2.7.1.21"/>
    </reaction>
</comment>
<comment type="subunit">
    <text evidence="1">Homotetramer.</text>
</comment>
<comment type="subcellular location">
    <subcellularLocation>
        <location evidence="1">Cytoplasm</location>
    </subcellularLocation>
</comment>
<comment type="similarity">
    <text evidence="1">Belongs to the thymidine kinase family.</text>
</comment>